<gene>
    <name type="ordered locus">BPSL0867</name>
</gene>
<reference key="1">
    <citation type="journal article" date="2004" name="Proc. Natl. Acad. Sci. U.S.A.">
        <title>Genomic plasticity of the causative agent of melioidosis, Burkholderia pseudomallei.</title>
        <authorList>
            <person name="Holden M.T.G."/>
            <person name="Titball R.W."/>
            <person name="Peacock S.J."/>
            <person name="Cerdeno-Tarraga A.-M."/>
            <person name="Atkins T."/>
            <person name="Crossman L.C."/>
            <person name="Pitt T."/>
            <person name="Churcher C."/>
            <person name="Mungall K.L."/>
            <person name="Bentley S.D."/>
            <person name="Sebaihia M."/>
            <person name="Thomson N.R."/>
            <person name="Bason N."/>
            <person name="Beacham I.R."/>
            <person name="Brooks K."/>
            <person name="Brown K.A."/>
            <person name="Brown N.F."/>
            <person name="Challis G.L."/>
            <person name="Cherevach I."/>
            <person name="Chillingworth T."/>
            <person name="Cronin A."/>
            <person name="Crossett B."/>
            <person name="Davis P."/>
            <person name="DeShazer D."/>
            <person name="Feltwell T."/>
            <person name="Fraser A."/>
            <person name="Hance Z."/>
            <person name="Hauser H."/>
            <person name="Holroyd S."/>
            <person name="Jagels K."/>
            <person name="Keith K.E."/>
            <person name="Maddison M."/>
            <person name="Moule S."/>
            <person name="Price C."/>
            <person name="Quail M.A."/>
            <person name="Rabbinowitsch E."/>
            <person name="Rutherford K."/>
            <person name="Sanders M."/>
            <person name="Simmonds M."/>
            <person name="Songsivilai S."/>
            <person name="Stevens K."/>
            <person name="Tumapa S."/>
            <person name="Vesaratchavest M."/>
            <person name="Whitehead S."/>
            <person name="Yeats C."/>
            <person name="Barrell B.G."/>
            <person name="Oyston P.C.F."/>
            <person name="Parkhill J."/>
        </authorList>
    </citation>
    <scope>NUCLEOTIDE SEQUENCE [LARGE SCALE GENOMIC DNA]</scope>
    <source>
        <strain>K96243</strain>
    </source>
</reference>
<feature type="chain" id="PRO_0000261923" description="Nucleotide-binding protein BPSL0867">
    <location>
        <begin position="1"/>
        <end position="161"/>
    </location>
</feature>
<sequence length="161" mass="18036">MPSFDVVSEANMIEVKNAVEQSNKEISTRFDFKGSDARVEQKERELTLYADDDFKLGQVKDVLIGKMAKRNVDVRFLDYGKIEKIGGDKVKQVVTIKKGVSGDLAKKVVRIVKDSKIKVQASIQGDAVRVSGAKRDDLQSTIALLRKEVTDTPLDFNNFRD</sequence>
<proteinExistence type="inferred from homology"/>
<name>Y867_BURPS</name>
<evidence type="ECO:0000255" key="1">
    <source>
        <dbReference type="HAMAP-Rule" id="MF_00632"/>
    </source>
</evidence>
<dbReference type="EMBL" id="BX571965">
    <property type="protein sequence ID" value="CAH34859.1"/>
    <property type="molecule type" value="Genomic_DNA"/>
</dbReference>
<dbReference type="RefSeq" id="WP_004189237.1">
    <property type="nucleotide sequence ID" value="NZ_CP009538.1"/>
</dbReference>
<dbReference type="RefSeq" id="YP_107492.1">
    <property type="nucleotide sequence ID" value="NC_006350.1"/>
</dbReference>
<dbReference type="SMR" id="Q63WM4"/>
<dbReference type="STRING" id="272560.BPSL0867"/>
<dbReference type="KEGG" id="bps:BPSL0867"/>
<dbReference type="PATRIC" id="fig|272560.51.peg.729"/>
<dbReference type="eggNOG" id="COG1666">
    <property type="taxonomic scope" value="Bacteria"/>
</dbReference>
<dbReference type="Proteomes" id="UP000000605">
    <property type="component" value="Chromosome 1"/>
</dbReference>
<dbReference type="GO" id="GO:0005829">
    <property type="term" value="C:cytosol"/>
    <property type="evidence" value="ECO:0007669"/>
    <property type="project" value="TreeGrafter"/>
</dbReference>
<dbReference type="GO" id="GO:0000166">
    <property type="term" value="F:nucleotide binding"/>
    <property type="evidence" value="ECO:0007669"/>
    <property type="project" value="TreeGrafter"/>
</dbReference>
<dbReference type="CDD" id="cd11740">
    <property type="entry name" value="YajQ_like"/>
    <property type="match status" value="1"/>
</dbReference>
<dbReference type="Gene3D" id="3.30.70.860">
    <property type="match status" value="1"/>
</dbReference>
<dbReference type="Gene3D" id="3.30.70.990">
    <property type="entry name" value="YajQ-like, domain 2"/>
    <property type="match status" value="1"/>
</dbReference>
<dbReference type="HAMAP" id="MF_00632">
    <property type="entry name" value="YajQ"/>
    <property type="match status" value="1"/>
</dbReference>
<dbReference type="InterPro" id="IPR007551">
    <property type="entry name" value="DUF520"/>
</dbReference>
<dbReference type="InterPro" id="IPR035571">
    <property type="entry name" value="UPF0234-like_C"/>
</dbReference>
<dbReference type="InterPro" id="IPR035570">
    <property type="entry name" value="UPF0234_N"/>
</dbReference>
<dbReference type="InterPro" id="IPR036183">
    <property type="entry name" value="YajQ-like_sf"/>
</dbReference>
<dbReference type="NCBIfam" id="NF003819">
    <property type="entry name" value="PRK05412.1"/>
    <property type="match status" value="1"/>
</dbReference>
<dbReference type="PANTHER" id="PTHR30476">
    <property type="entry name" value="UPF0234 PROTEIN YAJQ"/>
    <property type="match status" value="1"/>
</dbReference>
<dbReference type="PANTHER" id="PTHR30476:SF0">
    <property type="entry name" value="UPF0234 PROTEIN YAJQ"/>
    <property type="match status" value="1"/>
</dbReference>
<dbReference type="Pfam" id="PF04461">
    <property type="entry name" value="DUF520"/>
    <property type="match status" value="1"/>
</dbReference>
<dbReference type="SUPFAM" id="SSF89963">
    <property type="entry name" value="YajQ-like"/>
    <property type="match status" value="2"/>
</dbReference>
<accession>Q63WM4</accession>
<protein>
    <recommendedName>
        <fullName evidence="1">Nucleotide-binding protein BPSL0867</fullName>
    </recommendedName>
</protein>
<keyword id="KW-0547">Nucleotide-binding</keyword>
<keyword id="KW-1185">Reference proteome</keyword>
<comment type="function">
    <text evidence="1">Nucleotide-binding protein.</text>
</comment>
<comment type="similarity">
    <text evidence="1">Belongs to the YajQ family.</text>
</comment>
<organism>
    <name type="scientific">Burkholderia pseudomallei (strain K96243)</name>
    <dbReference type="NCBI Taxonomy" id="272560"/>
    <lineage>
        <taxon>Bacteria</taxon>
        <taxon>Pseudomonadati</taxon>
        <taxon>Pseudomonadota</taxon>
        <taxon>Betaproteobacteria</taxon>
        <taxon>Burkholderiales</taxon>
        <taxon>Burkholderiaceae</taxon>
        <taxon>Burkholderia</taxon>
        <taxon>pseudomallei group</taxon>
    </lineage>
</organism>